<sequence length="149" mass="16928">MNKGQRHIKIREIIANKEIETQDELVDILRNEGFNVTQATVSRDIKELHLVKVPLHDGRYKYSLPADQRFNPLQKLKRNLVDSFVKLDTAGHMLVLKTLPGNAHSLGALIDHLEWDEIIGTICGDDTCLIICRTPEDTGVVSDRFLNML</sequence>
<gene>
    <name evidence="1" type="primary">argR</name>
    <name type="ordered locus">BCE33L3928</name>
</gene>
<accession>Q635A9</accession>
<dbReference type="EMBL" id="CP000001">
    <property type="protein sequence ID" value="AAU16340.1"/>
    <property type="molecule type" value="Genomic_DNA"/>
</dbReference>
<dbReference type="RefSeq" id="WP_001032581.1">
    <property type="nucleotide sequence ID" value="NZ_CP009968.1"/>
</dbReference>
<dbReference type="SMR" id="Q635A9"/>
<dbReference type="GeneID" id="93006927"/>
<dbReference type="KEGG" id="bcz:BCE33L3928"/>
<dbReference type="PATRIC" id="fig|288681.22.peg.1469"/>
<dbReference type="UniPathway" id="UPA00068"/>
<dbReference type="Proteomes" id="UP000002612">
    <property type="component" value="Chromosome"/>
</dbReference>
<dbReference type="GO" id="GO:0005737">
    <property type="term" value="C:cytoplasm"/>
    <property type="evidence" value="ECO:0007669"/>
    <property type="project" value="UniProtKB-SubCell"/>
</dbReference>
<dbReference type="GO" id="GO:0034618">
    <property type="term" value="F:arginine binding"/>
    <property type="evidence" value="ECO:0007669"/>
    <property type="project" value="InterPro"/>
</dbReference>
<dbReference type="GO" id="GO:0003677">
    <property type="term" value="F:DNA binding"/>
    <property type="evidence" value="ECO:0007669"/>
    <property type="project" value="UniProtKB-KW"/>
</dbReference>
<dbReference type="GO" id="GO:0003700">
    <property type="term" value="F:DNA-binding transcription factor activity"/>
    <property type="evidence" value="ECO:0007669"/>
    <property type="project" value="UniProtKB-UniRule"/>
</dbReference>
<dbReference type="GO" id="GO:0006526">
    <property type="term" value="P:L-arginine biosynthetic process"/>
    <property type="evidence" value="ECO:0007669"/>
    <property type="project" value="UniProtKB-UniPathway"/>
</dbReference>
<dbReference type="GO" id="GO:0051259">
    <property type="term" value="P:protein complex oligomerization"/>
    <property type="evidence" value="ECO:0007669"/>
    <property type="project" value="InterPro"/>
</dbReference>
<dbReference type="GO" id="GO:1900079">
    <property type="term" value="P:regulation of arginine biosynthetic process"/>
    <property type="evidence" value="ECO:0007669"/>
    <property type="project" value="UniProtKB-UniRule"/>
</dbReference>
<dbReference type="FunFam" id="1.10.10.10:FF:000172">
    <property type="entry name" value="Arginine repressor"/>
    <property type="match status" value="1"/>
</dbReference>
<dbReference type="FunFam" id="3.30.1360.40:FF:000006">
    <property type="entry name" value="Arginine repressor"/>
    <property type="match status" value="1"/>
</dbReference>
<dbReference type="Gene3D" id="3.30.1360.40">
    <property type="match status" value="1"/>
</dbReference>
<dbReference type="Gene3D" id="1.10.10.10">
    <property type="entry name" value="Winged helix-like DNA-binding domain superfamily/Winged helix DNA-binding domain"/>
    <property type="match status" value="1"/>
</dbReference>
<dbReference type="HAMAP" id="MF_00173">
    <property type="entry name" value="Arg_repressor"/>
    <property type="match status" value="1"/>
</dbReference>
<dbReference type="InterPro" id="IPR001669">
    <property type="entry name" value="Arg_repress"/>
</dbReference>
<dbReference type="InterPro" id="IPR020899">
    <property type="entry name" value="Arg_repress_C"/>
</dbReference>
<dbReference type="InterPro" id="IPR036251">
    <property type="entry name" value="Arg_repress_C_sf"/>
</dbReference>
<dbReference type="InterPro" id="IPR020900">
    <property type="entry name" value="Arg_repress_DNA-bd"/>
</dbReference>
<dbReference type="InterPro" id="IPR036388">
    <property type="entry name" value="WH-like_DNA-bd_sf"/>
</dbReference>
<dbReference type="InterPro" id="IPR036390">
    <property type="entry name" value="WH_DNA-bd_sf"/>
</dbReference>
<dbReference type="NCBIfam" id="TIGR01529">
    <property type="entry name" value="argR_whole"/>
    <property type="match status" value="1"/>
</dbReference>
<dbReference type="NCBIfam" id="NF003281">
    <property type="entry name" value="PRK04280.1"/>
    <property type="match status" value="1"/>
</dbReference>
<dbReference type="PANTHER" id="PTHR34471">
    <property type="entry name" value="ARGININE REPRESSOR"/>
    <property type="match status" value="1"/>
</dbReference>
<dbReference type="PANTHER" id="PTHR34471:SF1">
    <property type="entry name" value="ARGININE REPRESSOR"/>
    <property type="match status" value="1"/>
</dbReference>
<dbReference type="Pfam" id="PF01316">
    <property type="entry name" value="Arg_repressor"/>
    <property type="match status" value="1"/>
</dbReference>
<dbReference type="Pfam" id="PF02863">
    <property type="entry name" value="Arg_repressor_C"/>
    <property type="match status" value="1"/>
</dbReference>
<dbReference type="PRINTS" id="PR01467">
    <property type="entry name" value="ARGREPRESSOR"/>
</dbReference>
<dbReference type="SUPFAM" id="SSF55252">
    <property type="entry name" value="C-terminal domain of arginine repressor"/>
    <property type="match status" value="1"/>
</dbReference>
<dbReference type="SUPFAM" id="SSF46785">
    <property type="entry name" value="Winged helix' DNA-binding domain"/>
    <property type="match status" value="1"/>
</dbReference>
<comment type="function">
    <text evidence="1">Regulates arginine biosynthesis genes.</text>
</comment>
<comment type="pathway">
    <text>Amino-acid biosynthesis; L-arginine biosynthesis [regulation].</text>
</comment>
<comment type="subcellular location">
    <subcellularLocation>
        <location evidence="1">Cytoplasm</location>
    </subcellularLocation>
</comment>
<comment type="similarity">
    <text evidence="1">Belongs to the ArgR family.</text>
</comment>
<name>ARGR_BACCZ</name>
<keyword id="KW-0028">Amino-acid biosynthesis</keyword>
<keyword id="KW-0055">Arginine biosynthesis</keyword>
<keyword id="KW-0963">Cytoplasm</keyword>
<keyword id="KW-0238">DNA-binding</keyword>
<keyword id="KW-0678">Repressor</keyword>
<keyword id="KW-0804">Transcription</keyword>
<keyword id="KW-0805">Transcription regulation</keyword>
<organism>
    <name type="scientific">Bacillus cereus (strain ZK / E33L)</name>
    <dbReference type="NCBI Taxonomy" id="288681"/>
    <lineage>
        <taxon>Bacteria</taxon>
        <taxon>Bacillati</taxon>
        <taxon>Bacillota</taxon>
        <taxon>Bacilli</taxon>
        <taxon>Bacillales</taxon>
        <taxon>Bacillaceae</taxon>
        <taxon>Bacillus</taxon>
        <taxon>Bacillus cereus group</taxon>
    </lineage>
</organism>
<protein>
    <recommendedName>
        <fullName evidence="1">Arginine repressor</fullName>
    </recommendedName>
</protein>
<feature type="chain" id="PRO_0000205064" description="Arginine repressor">
    <location>
        <begin position="1"/>
        <end position="149"/>
    </location>
</feature>
<evidence type="ECO:0000255" key="1">
    <source>
        <dbReference type="HAMAP-Rule" id="MF_00173"/>
    </source>
</evidence>
<proteinExistence type="inferred from homology"/>
<reference key="1">
    <citation type="journal article" date="2006" name="J. Bacteriol.">
        <title>Pathogenomic sequence analysis of Bacillus cereus and Bacillus thuringiensis isolates closely related to Bacillus anthracis.</title>
        <authorList>
            <person name="Han C.S."/>
            <person name="Xie G."/>
            <person name="Challacombe J.F."/>
            <person name="Altherr M.R."/>
            <person name="Bhotika S.S."/>
            <person name="Bruce D."/>
            <person name="Campbell C.S."/>
            <person name="Campbell M.L."/>
            <person name="Chen J."/>
            <person name="Chertkov O."/>
            <person name="Cleland C."/>
            <person name="Dimitrijevic M."/>
            <person name="Doggett N.A."/>
            <person name="Fawcett J.J."/>
            <person name="Glavina T."/>
            <person name="Goodwin L.A."/>
            <person name="Hill K.K."/>
            <person name="Hitchcock P."/>
            <person name="Jackson P.J."/>
            <person name="Keim P."/>
            <person name="Kewalramani A.R."/>
            <person name="Longmire J."/>
            <person name="Lucas S."/>
            <person name="Malfatti S."/>
            <person name="McMurry K."/>
            <person name="Meincke L.J."/>
            <person name="Misra M."/>
            <person name="Moseman B.L."/>
            <person name="Mundt M."/>
            <person name="Munk A.C."/>
            <person name="Okinaka R.T."/>
            <person name="Parson-Quintana B."/>
            <person name="Reilly L.P."/>
            <person name="Richardson P."/>
            <person name="Robinson D.L."/>
            <person name="Rubin E."/>
            <person name="Saunders E."/>
            <person name="Tapia R."/>
            <person name="Tesmer J.G."/>
            <person name="Thayer N."/>
            <person name="Thompson L.S."/>
            <person name="Tice H."/>
            <person name="Ticknor L.O."/>
            <person name="Wills P.L."/>
            <person name="Brettin T.S."/>
            <person name="Gilna P."/>
        </authorList>
    </citation>
    <scope>NUCLEOTIDE SEQUENCE [LARGE SCALE GENOMIC DNA]</scope>
    <source>
        <strain>ZK / E33L</strain>
    </source>
</reference>